<keyword id="KW-0961">Cell wall biogenesis/degradation</keyword>
<keyword id="KW-0963">Cytoplasm</keyword>
<keyword id="KW-0238">DNA-binding</keyword>
<keyword id="KW-0479">Metal-binding</keyword>
<keyword id="KW-0539">Nucleus</keyword>
<keyword id="KW-0597">Phosphoprotein</keyword>
<keyword id="KW-1185">Reference proteome</keyword>
<keyword id="KW-0804">Transcription</keyword>
<keyword id="KW-0805">Transcription regulation</keyword>
<keyword id="KW-0862">Zinc</keyword>
<accession>P19541</accession>
<accession>D6W3N4</accession>
<comment type="function">
    <text evidence="6 7 8">Transcription factor which regulates the expression of genes for gluconeogenesis, the TCA cycle, and glucose metabolism. Involved in the cell wall remodeling process and drug resistance.</text>
</comment>
<comment type="interaction">
    <interactant intactId="EBI-29389">
        <id>P19541</id>
    </interactant>
    <interactant intactId="EBI-21048">
        <id>P38140</id>
        <label>ERT1</label>
    </interactant>
    <organismsDiffer>false</organismsDiffer>
    <experiments>2</experiments>
</comment>
<comment type="subcellular location">
    <subcellularLocation>
        <location evidence="4">Cytoplasm</location>
    </subcellularLocation>
    <subcellularLocation>
        <location evidence="1 4">Nucleus</location>
    </subcellularLocation>
</comment>
<comment type="PTM">
    <text evidence="7">Phosphorylated by SNF1 in absence of glucose. The phosphorylation is required for induction of transcription of gluconeogenic genes.</text>
</comment>
<comment type="disruption phenotype">
    <text evidence="3">Sensitivity to ketoconazole.</text>
</comment>
<comment type="miscellaneous">
    <text evidence="5">Present with 799 molecules/cell in log phase SD medium.</text>
</comment>
<protein>
    <recommendedName>
        <fullName>Regulator of drug sensitivity 2</fullName>
    </recommendedName>
</protein>
<reference key="1">
    <citation type="journal article" date="1997" name="Nature">
        <title>The nucleotide sequence of Saccharomyces cerevisiae chromosome XVI.</title>
        <authorList>
            <person name="Bussey H."/>
            <person name="Storms R.K."/>
            <person name="Ahmed A."/>
            <person name="Albermann K."/>
            <person name="Allen E."/>
            <person name="Ansorge W."/>
            <person name="Araujo R."/>
            <person name="Aparicio A."/>
            <person name="Barrell B.G."/>
            <person name="Badcock K."/>
            <person name="Benes V."/>
            <person name="Botstein D."/>
            <person name="Bowman S."/>
            <person name="Brueckner M."/>
            <person name="Carpenter J."/>
            <person name="Cherry J.M."/>
            <person name="Chung E."/>
            <person name="Churcher C.M."/>
            <person name="Coster F."/>
            <person name="Davis K."/>
            <person name="Davis R.W."/>
            <person name="Dietrich F.S."/>
            <person name="Delius H."/>
            <person name="DiPaolo T."/>
            <person name="Dubois E."/>
            <person name="Duesterhoeft A."/>
            <person name="Duncan M."/>
            <person name="Floeth M."/>
            <person name="Fortin N."/>
            <person name="Friesen J.D."/>
            <person name="Fritz C."/>
            <person name="Goffeau A."/>
            <person name="Hall J."/>
            <person name="Hebling U."/>
            <person name="Heumann K."/>
            <person name="Hilbert H."/>
            <person name="Hillier L.W."/>
            <person name="Hunicke-Smith S."/>
            <person name="Hyman R.W."/>
            <person name="Johnston M."/>
            <person name="Kalman S."/>
            <person name="Kleine K."/>
            <person name="Komp C."/>
            <person name="Kurdi O."/>
            <person name="Lashkari D."/>
            <person name="Lew H."/>
            <person name="Lin A."/>
            <person name="Lin D."/>
            <person name="Louis E.J."/>
            <person name="Marathe R."/>
            <person name="Messenguy F."/>
            <person name="Mewes H.-W."/>
            <person name="Mirtipati S."/>
            <person name="Moestl D."/>
            <person name="Mueller-Auer S."/>
            <person name="Namath A."/>
            <person name="Nentwich U."/>
            <person name="Oefner P."/>
            <person name="Pearson D."/>
            <person name="Petel F.X."/>
            <person name="Pohl T.M."/>
            <person name="Purnelle B."/>
            <person name="Rajandream M.A."/>
            <person name="Rechmann S."/>
            <person name="Rieger M."/>
            <person name="Riles L."/>
            <person name="Roberts D."/>
            <person name="Schaefer M."/>
            <person name="Scharfe M."/>
            <person name="Scherens B."/>
            <person name="Schramm S."/>
            <person name="Schroeder M."/>
            <person name="Sdicu A.-M."/>
            <person name="Tettelin H."/>
            <person name="Urrestarazu L.A."/>
            <person name="Ushinsky S."/>
            <person name="Vierendeels F."/>
            <person name="Vissers S."/>
            <person name="Voss H."/>
            <person name="Walsh S.V."/>
            <person name="Wambutt R."/>
            <person name="Wang Y."/>
            <person name="Wedler E."/>
            <person name="Wedler H."/>
            <person name="Winnett E."/>
            <person name="Zhong W.-W."/>
            <person name="Zollner A."/>
            <person name="Vo D.H."/>
            <person name="Hani J."/>
        </authorList>
    </citation>
    <scope>NUCLEOTIDE SEQUENCE [LARGE SCALE GENOMIC DNA]</scope>
    <source>
        <strain>ATCC 204508 / S288c</strain>
    </source>
</reference>
<reference key="2">
    <citation type="journal article" date="2014" name="G3 (Bethesda)">
        <title>The reference genome sequence of Saccharomyces cerevisiae: Then and now.</title>
        <authorList>
            <person name="Engel S.R."/>
            <person name="Dietrich F.S."/>
            <person name="Fisk D.G."/>
            <person name="Binkley G."/>
            <person name="Balakrishnan R."/>
            <person name="Costanzo M.C."/>
            <person name="Dwight S.S."/>
            <person name="Hitz B.C."/>
            <person name="Karra K."/>
            <person name="Nash R.S."/>
            <person name="Weng S."/>
            <person name="Wong E.D."/>
            <person name="Lloyd P."/>
            <person name="Skrzypek M.S."/>
            <person name="Miyasato S.R."/>
            <person name="Simison M."/>
            <person name="Cherry J.M."/>
        </authorList>
    </citation>
    <scope>GENOME REANNOTATION</scope>
    <source>
        <strain>ATCC 204508 / S288c</strain>
    </source>
</reference>
<reference key="3">
    <citation type="journal article" date="2007" name="Genome Res.">
        <title>Approaching a complete repository of sequence-verified protein-encoding clones for Saccharomyces cerevisiae.</title>
        <authorList>
            <person name="Hu Y."/>
            <person name="Rolfs A."/>
            <person name="Bhullar B."/>
            <person name="Murthy T.V.S."/>
            <person name="Zhu C."/>
            <person name="Berger M.F."/>
            <person name="Camargo A.A."/>
            <person name="Kelley F."/>
            <person name="McCarron S."/>
            <person name="Jepson D."/>
            <person name="Richardson A."/>
            <person name="Raphael J."/>
            <person name="Moreira D."/>
            <person name="Taycher E."/>
            <person name="Zuo D."/>
            <person name="Mohr S."/>
            <person name="Kane M.F."/>
            <person name="Williamson J."/>
            <person name="Simpson A.J.G."/>
            <person name="Bulyk M.L."/>
            <person name="Harlow E."/>
            <person name="Marsischky G."/>
            <person name="Kolodner R.D."/>
            <person name="LaBaer J."/>
        </authorList>
    </citation>
    <scope>NUCLEOTIDE SEQUENCE [GENOMIC DNA]</scope>
    <source>
        <strain>ATCC 204508 / S288c</strain>
    </source>
</reference>
<reference key="4">
    <citation type="journal article" date="1990" name="EMBO J.">
        <title>Cytochrome oxidase assembly in yeast requires the product of COX11, a homolog of the P. denitrificans protein encoded by ORF3.</title>
        <authorList>
            <person name="Tzagoloff A."/>
            <person name="Capitanio N."/>
            <person name="Nobrega M.P."/>
            <person name="Gatti D."/>
        </authorList>
    </citation>
    <scope>NUCLEOTIDE SEQUENCE [GENOMIC DNA] OF 1-95</scope>
</reference>
<reference key="5">
    <citation type="journal article" date="1992" name="Protein Sci.">
        <title>Comprehensive sequence analysis of the 182 predicted open reading frames of yeast chromosome III.</title>
        <authorList>
            <person name="Bork P."/>
            <person name="Ouzounis C."/>
            <person name="Sander C."/>
            <person name="Scharf M."/>
            <person name="Schneider R."/>
            <person name="Sonnhammer E."/>
        </authorList>
    </citation>
    <scope>PRESENCE OF A ZN(2)-CYS(6) FUNGAL-TYPE BINUCLEAR CLUSTER</scope>
</reference>
<reference key="6">
    <citation type="journal article" date="2002" name="J. Biol. Chem.">
        <title>New regulators of drug sensitivity in the family of yeast zinc cluster proteins.</title>
        <authorList>
            <person name="Akache B."/>
            <person name="Turcotte B."/>
        </authorList>
    </citation>
    <scope>DISRUPTION PHENOTYPE</scope>
</reference>
<reference key="7">
    <citation type="journal article" date="2003" name="Nature">
        <title>Global analysis of protein localization in budding yeast.</title>
        <authorList>
            <person name="Huh W.-K."/>
            <person name="Falvo J.V."/>
            <person name="Gerke L.C."/>
            <person name="Carroll A.S."/>
            <person name="Howson R.W."/>
            <person name="Weissman J.S."/>
            <person name="O'Shea E.K."/>
        </authorList>
    </citation>
    <scope>SUBCELLULAR LOCATION [LARGE SCALE ANALYSIS]</scope>
</reference>
<reference key="8">
    <citation type="journal article" date="2003" name="Nature">
        <title>Global analysis of protein expression in yeast.</title>
        <authorList>
            <person name="Ghaemmaghami S."/>
            <person name="Huh W.-K."/>
            <person name="Bower K."/>
            <person name="Howson R.W."/>
            <person name="Belle A."/>
            <person name="Dephoure N."/>
            <person name="O'Shea E.K."/>
            <person name="Weissman J.S."/>
        </authorList>
    </citation>
    <scope>LEVEL OF PROTEIN EXPRESSION [LARGE SCALE ANALYSIS]</scope>
</reference>
<reference key="9">
    <citation type="journal article" date="2006" name="PLoS Pathog.">
        <title>A drug-sensitive genetic network masks fungi from the immune system.</title>
        <authorList>
            <person name="Wheeler R.T."/>
            <person name="Fink G.R."/>
        </authorList>
    </citation>
    <scope>FUNCTION</scope>
</reference>
<reference key="10">
    <citation type="journal article" date="2006" name="Proc. Natl. Acad. Sci. U.S.A.">
        <title>Linking DNA-binding proteins to their recognition sequences by using protein microarrays.</title>
        <authorList>
            <person name="Ho S.-W."/>
            <person name="Jona G."/>
            <person name="Chen C.T.L."/>
            <person name="Johnston M."/>
            <person name="Snyder M."/>
        </authorList>
    </citation>
    <scope>DNA-BINDING</scope>
</reference>
<reference key="11">
    <citation type="journal article" date="2007" name="Mol. Cell. Biol.">
        <title>Regulation of gluconeogenesis in Saccharomyces cerevisiae is mediated by activator and repressor functions of Rds2.</title>
        <authorList>
            <person name="Soontorngun N."/>
            <person name="Larochelle M."/>
            <person name="Drouin S."/>
            <person name="Robert F."/>
            <person name="Turcotte B."/>
        </authorList>
    </citation>
    <scope>FUNCTION</scope>
    <scope>DNA-BINDING</scope>
    <scope>PHOSPHORYLATION BY SNF1</scope>
</reference>
<reference key="12">
    <citation type="journal article" date="2008" name="Int. Microbiol.">
        <title>Saccharomyces cerevisiae Rds2 transcription factor involvement in cell wall composition and architecture.</title>
        <authorList>
            <person name="Moreno I."/>
            <person name="Tutrone N."/>
            <person name="Sentandreu R."/>
            <person name="Valentin E."/>
        </authorList>
    </citation>
    <scope>FUNCTION</scope>
</reference>
<reference key="13">
    <citation type="journal article" date="2008" name="Mol. Cell. Proteomics">
        <title>A multidimensional chromatography technology for in-depth phosphoproteome analysis.</title>
        <authorList>
            <person name="Albuquerque C.P."/>
            <person name="Smolka M.B."/>
            <person name="Payne S.H."/>
            <person name="Bafna V."/>
            <person name="Eng J."/>
            <person name="Zhou H."/>
        </authorList>
    </citation>
    <scope>PHOSPHORYLATION [LARGE SCALE ANALYSIS] AT SER-102 AND THR-231</scope>
    <scope>IDENTIFICATION BY MASS SPECTROMETRY [LARGE SCALE ANALYSIS]</scope>
</reference>
<name>RDS2_YEAST</name>
<evidence type="ECO:0000255" key="1">
    <source>
        <dbReference type="PROSITE-ProRule" id="PRU00227"/>
    </source>
</evidence>
<evidence type="ECO:0000256" key="2">
    <source>
        <dbReference type="SAM" id="MobiDB-lite"/>
    </source>
</evidence>
<evidence type="ECO:0000269" key="3">
    <source>
    </source>
</evidence>
<evidence type="ECO:0000269" key="4">
    <source>
    </source>
</evidence>
<evidence type="ECO:0000269" key="5">
    <source>
    </source>
</evidence>
<evidence type="ECO:0000269" key="6">
    <source>
    </source>
</evidence>
<evidence type="ECO:0000269" key="7">
    <source>
    </source>
</evidence>
<evidence type="ECO:0000269" key="8">
    <source>
    </source>
</evidence>
<evidence type="ECO:0007744" key="9">
    <source>
    </source>
</evidence>
<gene>
    <name type="primary">RDS2</name>
    <name type="ordered locus">YPL133C</name>
    <name type="ORF">LPI12C</name>
</gene>
<proteinExistence type="evidence at protein level"/>
<sequence length="446" mass="50082">MSANSGVKRASKAFKTCLFCKRSHVVCDKQRPCSRCVKRDIAHLCREDDIAVPNEMPSQHESSPNDNNIQGKYANKAHTGIPSDYQNEPVNKSGSTYGEELSPKLDSSLVNDTTSLLLPQQPVFVSENVGSEFSSLNEFLSMLENPLLTQTSLSSSSASNVHLENGSQTTQSPLEYQNDNRRDEIGVARQENRSPTIMSGSSNSISKGDKQDQEKEESRILANANENSAPTPKEQFFLTAADPSTEMTPEHRLKLVINAKLEAGLLKPYNYAKGYARLQDYMDKYMNQSSKQRILKPLSTIRPAFRTIARSLKDVDLVLVEESFERMLLSYDRVFTSMSMPACLCRRTGEIYRANKEFASLVDCTVDDLRDGKLAIYELMTEESAVNFWEKYGSIAFDKGQKAVLTSCSLRTKDGIRKRPCCFSFTIRRDRYNIPICIVGNFIPLS</sequence>
<organism>
    <name type="scientific">Saccharomyces cerevisiae (strain ATCC 204508 / S288c)</name>
    <name type="common">Baker's yeast</name>
    <dbReference type="NCBI Taxonomy" id="559292"/>
    <lineage>
        <taxon>Eukaryota</taxon>
        <taxon>Fungi</taxon>
        <taxon>Dikarya</taxon>
        <taxon>Ascomycota</taxon>
        <taxon>Saccharomycotina</taxon>
        <taxon>Saccharomycetes</taxon>
        <taxon>Saccharomycetales</taxon>
        <taxon>Saccharomycetaceae</taxon>
        <taxon>Saccharomyces</taxon>
    </lineage>
</organism>
<dbReference type="EMBL" id="U43703">
    <property type="protein sequence ID" value="AAB68226.1"/>
    <property type="molecule type" value="Genomic_DNA"/>
</dbReference>
<dbReference type="EMBL" id="AY693168">
    <property type="protein sequence ID" value="AAT93187.1"/>
    <property type="molecule type" value="Genomic_DNA"/>
</dbReference>
<dbReference type="EMBL" id="X55731">
    <property type="protein sequence ID" value="CAA39262.1"/>
    <property type="molecule type" value="Genomic_DNA"/>
</dbReference>
<dbReference type="EMBL" id="BK006949">
    <property type="protein sequence ID" value="DAA11300.1"/>
    <property type="molecule type" value="Genomic_DNA"/>
</dbReference>
<dbReference type="PIR" id="S69051">
    <property type="entry name" value="S69051"/>
</dbReference>
<dbReference type="RefSeq" id="NP_015192.1">
    <property type="nucleotide sequence ID" value="NM_001183947.1"/>
</dbReference>
<dbReference type="BioGRID" id="36048">
    <property type="interactions" value="55"/>
</dbReference>
<dbReference type="DIP" id="DIP-1515N"/>
<dbReference type="FunCoup" id="P19541">
    <property type="interactions" value="652"/>
</dbReference>
<dbReference type="IntAct" id="P19541">
    <property type="interactions" value="5"/>
</dbReference>
<dbReference type="MINT" id="P19541"/>
<dbReference type="STRING" id="4932.YPL133C"/>
<dbReference type="iPTMnet" id="P19541"/>
<dbReference type="PaxDb" id="4932-YPL133C"/>
<dbReference type="PeptideAtlas" id="P19541"/>
<dbReference type="EnsemblFungi" id="YPL133C_mRNA">
    <property type="protein sequence ID" value="YPL133C"/>
    <property type="gene ID" value="YPL133C"/>
</dbReference>
<dbReference type="GeneID" id="855970"/>
<dbReference type="KEGG" id="sce:YPL133C"/>
<dbReference type="AGR" id="SGD:S000006054"/>
<dbReference type="SGD" id="S000006054">
    <property type="gene designation" value="RDS2"/>
</dbReference>
<dbReference type="VEuPathDB" id="FungiDB:YPL133C"/>
<dbReference type="eggNOG" id="ENOG502QQGC">
    <property type="taxonomic scope" value="Eukaryota"/>
</dbReference>
<dbReference type="GeneTree" id="ENSGT00940000176385"/>
<dbReference type="HOGENOM" id="CLU_010748_0_1_1"/>
<dbReference type="InParanoid" id="P19541"/>
<dbReference type="OMA" id="RWMDSNV"/>
<dbReference type="OrthoDB" id="65716at2759"/>
<dbReference type="BioCyc" id="YEAST:G3O-34032-MONOMER"/>
<dbReference type="BioGRID-ORCS" id="855970">
    <property type="hits" value="2 hits in 13 CRISPR screens"/>
</dbReference>
<dbReference type="PRO" id="PR:P19541"/>
<dbReference type="Proteomes" id="UP000002311">
    <property type="component" value="Chromosome XVI"/>
</dbReference>
<dbReference type="RNAct" id="P19541">
    <property type="molecule type" value="protein"/>
</dbReference>
<dbReference type="GO" id="GO:0005737">
    <property type="term" value="C:cytoplasm"/>
    <property type="evidence" value="ECO:0007005"/>
    <property type="project" value="SGD"/>
</dbReference>
<dbReference type="GO" id="GO:0005634">
    <property type="term" value="C:nucleus"/>
    <property type="evidence" value="ECO:0007005"/>
    <property type="project" value="SGD"/>
</dbReference>
<dbReference type="GO" id="GO:0001228">
    <property type="term" value="F:DNA-binding transcription activator activity, RNA polymerase II-specific"/>
    <property type="evidence" value="ECO:0000315"/>
    <property type="project" value="SGD"/>
</dbReference>
<dbReference type="GO" id="GO:0000978">
    <property type="term" value="F:RNA polymerase II cis-regulatory region sequence-specific DNA binding"/>
    <property type="evidence" value="ECO:0000314"/>
    <property type="project" value="SGD"/>
</dbReference>
<dbReference type="GO" id="GO:0000977">
    <property type="term" value="F:RNA polymerase II transcription regulatory region sequence-specific DNA binding"/>
    <property type="evidence" value="ECO:0000318"/>
    <property type="project" value="GO_Central"/>
</dbReference>
<dbReference type="GO" id="GO:0043565">
    <property type="term" value="F:sequence-specific DNA binding"/>
    <property type="evidence" value="ECO:0007005"/>
    <property type="project" value="SGD"/>
</dbReference>
<dbReference type="GO" id="GO:0008270">
    <property type="term" value="F:zinc ion binding"/>
    <property type="evidence" value="ECO:0007669"/>
    <property type="project" value="InterPro"/>
</dbReference>
<dbReference type="GO" id="GO:0071555">
    <property type="term" value="P:cell wall organization"/>
    <property type="evidence" value="ECO:0007669"/>
    <property type="project" value="UniProtKB-KW"/>
</dbReference>
<dbReference type="GO" id="GO:0071466">
    <property type="term" value="P:cellular response to xenobiotic stimulus"/>
    <property type="evidence" value="ECO:0000315"/>
    <property type="project" value="SGD"/>
</dbReference>
<dbReference type="GO" id="GO:0000122">
    <property type="term" value="P:negative regulation of transcription by RNA polymerase II"/>
    <property type="evidence" value="ECO:0000315"/>
    <property type="project" value="SGD"/>
</dbReference>
<dbReference type="GO" id="GO:0045722">
    <property type="term" value="P:positive regulation of gluconeogenesis"/>
    <property type="evidence" value="ECO:0000315"/>
    <property type="project" value="SGD"/>
</dbReference>
<dbReference type="GO" id="GO:0045944">
    <property type="term" value="P:positive regulation of transcription by RNA polymerase II"/>
    <property type="evidence" value="ECO:0000315"/>
    <property type="project" value="SGD"/>
</dbReference>
<dbReference type="CDD" id="cd00067">
    <property type="entry name" value="GAL4"/>
    <property type="match status" value="1"/>
</dbReference>
<dbReference type="Gene3D" id="4.10.240.10">
    <property type="entry name" value="Zn(2)-C6 fungal-type DNA-binding domain"/>
    <property type="match status" value="1"/>
</dbReference>
<dbReference type="InterPro" id="IPR035965">
    <property type="entry name" value="PAS-like_dom_sf"/>
</dbReference>
<dbReference type="InterPro" id="IPR056751">
    <property type="entry name" value="PAS_13"/>
</dbReference>
<dbReference type="InterPro" id="IPR053045">
    <property type="entry name" value="Zinc_cluster_trans_reg"/>
</dbReference>
<dbReference type="InterPro" id="IPR036864">
    <property type="entry name" value="Zn2-C6_fun-type_DNA-bd_sf"/>
</dbReference>
<dbReference type="InterPro" id="IPR001138">
    <property type="entry name" value="Zn2Cys6_DnaBD"/>
</dbReference>
<dbReference type="PANTHER" id="PTHR31986">
    <property type="entry name" value="REGULATOR OF DRUG SENSITIVITY 2"/>
    <property type="match status" value="1"/>
</dbReference>
<dbReference type="PANTHER" id="PTHR31986:SF7">
    <property type="entry name" value="REGULATOR OF DRUG SENSITIVITY 2"/>
    <property type="match status" value="1"/>
</dbReference>
<dbReference type="Pfam" id="PF24990">
    <property type="entry name" value="PAS_13"/>
    <property type="match status" value="1"/>
</dbReference>
<dbReference type="SMART" id="SM00066">
    <property type="entry name" value="GAL4"/>
    <property type="match status" value="1"/>
</dbReference>
<dbReference type="SUPFAM" id="SSF55785">
    <property type="entry name" value="PYP-like sensor domain (PAS domain)"/>
    <property type="match status" value="1"/>
</dbReference>
<dbReference type="SUPFAM" id="SSF57701">
    <property type="entry name" value="Zn2/Cys6 DNA-binding domain"/>
    <property type="match status" value="1"/>
</dbReference>
<dbReference type="PROSITE" id="PS00463">
    <property type="entry name" value="ZN2_CY6_FUNGAL_1"/>
    <property type="match status" value="1"/>
</dbReference>
<dbReference type="PROSITE" id="PS50048">
    <property type="entry name" value="ZN2_CY6_FUNGAL_2"/>
    <property type="match status" value="1"/>
</dbReference>
<feature type="chain" id="PRO_0000115006" description="Regulator of drug sensitivity 2">
    <location>
        <begin position="1"/>
        <end position="446"/>
    </location>
</feature>
<feature type="DNA-binding region" description="Zn(2)-C6 fungal-type" evidence="1">
    <location>
        <begin position="15"/>
        <end position="45"/>
    </location>
</feature>
<feature type="region of interest" description="Disordered" evidence="2">
    <location>
        <begin position="52"/>
        <end position="106"/>
    </location>
</feature>
<feature type="region of interest" description="Disordered" evidence="2">
    <location>
        <begin position="158"/>
        <end position="218"/>
    </location>
</feature>
<feature type="compositionally biased region" description="Polar residues" evidence="2">
    <location>
        <begin position="56"/>
        <end position="70"/>
    </location>
</feature>
<feature type="compositionally biased region" description="Polar residues" evidence="2">
    <location>
        <begin position="84"/>
        <end position="96"/>
    </location>
</feature>
<feature type="compositionally biased region" description="Polar residues" evidence="2">
    <location>
        <begin position="160"/>
        <end position="177"/>
    </location>
</feature>
<feature type="compositionally biased region" description="Basic and acidic residues" evidence="2">
    <location>
        <begin position="178"/>
        <end position="192"/>
    </location>
</feature>
<feature type="compositionally biased region" description="Polar residues" evidence="2">
    <location>
        <begin position="193"/>
        <end position="206"/>
    </location>
</feature>
<feature type="compositionally biased region" description="Basic and acidic residues" evidence="2">
    <location>
        <begin position="207"/>
        <end position="218"/>
    </location>
</feature>
<feature type="modified residue" description="Phosphoserine" evidence="9">
    <location>
        <position position="102"/>
    </location>
</feature>
<feature type="modified residue" description="Phosphothreonine" evidence="9">
    <location>
        <position position="231"/>
    </location>
</feature>